<comment type="function">
    <text evidence="1">Catalyzes the NADPH-dependent reduction of glutamyl-tRNA(Glu) to glutamate 1-semialdehyde (GSA).</text>
</comment>
<comment type="catalytic activity">
    <reaction evidence="1">
        <text>(S)-4-amino-5-oxopentanoate + tRNA(Glu) + NADP(+) = L-glutamyl-tRNA(Glu) + NADPH + H(+)</text>
        <dbReference type="Rhea" id="RHEA:12344"/>
        <dbReference type="Rhea" id="RHEA-COMP:9663"/>
        <dbReference type="Rhea" id="RHEA-COMP:9680"/>
        <dbReference type="ChEBI" id="CHEBI:15378"/>
        <dbReference type="ChEBI" id="CHEBI:57501"/>
        <dbReference type="ChEBI" id="CHEBI:57783"/>
        <dbReference type="ChEBI" id="CHEBI:58349"/>
        <dbReference type="ChEBI" id="CHEBI:78442"/>
        <dbReference type="ChEBI" id="CHEBI:78520"/>
        <dbReference type="EC" id="1.2.1.70"/>
    </reaction>
</comment>
<comment type="pathway">
    <text evidence="1">Porphyrin-containing compound metabolism; protoporphyrin-IX biosynthesis; 5-aminolevulinate from L-glutamyl-tRNA(Glu): step 1/2.</text>
</comment>
<comment type="subunit">
    <text evidence="1">Homodimer.</text>
</comment>
<comment type="domain">
    <text evidence="1">Possesses an unusual extended V-shaped dimeric structure with each monomer consisting of three distinct domains arranged along a curved 'spinal' alpha-helix. The N-terminal catalytic domain specifically recognizes the glutamate moiety of the substrate. The second domain is the NADPH-binding domain, and the third C-terminal domain is responsible for dimerization.</text>
</comment>
<comment type="miscellaneous">
    <text evidence="1">During catalysis, the active site Cys acts as a nucleophile attacking the alpha-carbonyl group of tRNA-bound glutamate with the formation of a thioester intermediate between enzyme and glutamate, and the concomitant release of tRNA(Glu). The thioester intermediate is finally reduced by direct hydride transfer from NADPH, to form the product GSA.</text>
</comment>
<comment type="similarity">
    <text evidence="1">Belongs to the glutamyl-tRNA reductase family.</text>
</comment>
<organism>
    <name type="scientific">Clostridium perfringens (strain SM101 / Type A)</name>
    <dbReference type="NCBI Taxonomy" id="289380"/>
    <lineage>
        <taxon>Bacteria</taxon>
        <taxon>Bacillati</taxon>
        <taxon>Bacillota</taxon>
        <taxon>Clostridia</taxon>
        <taxon>Eubacteriales</taxon>
        <taxon>Clostridiaceae</taxon>
        <taxon>Clostridium</taxon>
    </lineage>
</organism>
<dbReference type="EC" id="1.2.1.70" evidence="1"/>
<dbReference type="EMBL" id="CP000312">
    <property type="protein sequence ID" value="ABG85577.1"/>
    <property type="molecule type" value="Genomic_DNA"/>
</dbReference>
<dbReference type="RefSeq" id="WP_011592388.1">
    <property type="nucleotide sequence ID" value="NC_008262.1"/>
</dbReference>
<dbReference type="SMR" id="Q0ST14"/>
<dbReference type="KEGG" id="cpr:CPR_1424"/>
<dbReference type="UniPathway" id="UPA00251">
    <property type="reaction ID" value="UER00316"/>
</dbReference>
<dbReference type="Proteomes" id="UP000001824">
    <property type="component" value="Chromosome"/>
</dbReference>
<dbReference type="GO" id="GO:0008883">
    <property type="term" value="F:glutamyl-tRNA reductase activity"/>
    <property type="evidence" value="ECO:0007669"/>
    <property type="project" value="UniProtKB-UniRule"/>
</dbReference>
<dbReference type="GO" id="GO:0050661">
    <property type="term" value="F:NADP binding"/>
    <property type="evidence" value="ECO:0007669"/>
    <property type="project" value="InterPro"/>
</dbReference>
<dbReference type="GO" id="GO:0019353">
    <property type="term" value="P:protoporphyrinogen IX biosynthetic process from glutamate"/>
    <property type="evidence" value="ECO:0007669"/>
    <property type="project" value="TreeGrafter"/>
</dbReference>
<dbReference type="FunFam" id="3.30.460.30:FF:000001">
    <property type="entry name" value="Glutamyl-tRNA reductase"/>
    <property type="match status" value="1"/>
</dbReference>
<dbReference type="Gene3D" id="3.30.460.30">
    <property type="entry name" value="Glutamyl-tRNA reductase, N-terminal domain"/>
    <property type="match status" value="1"/>
</dbReference>
<dbReference type="Gene3D" id="3.40.50.720">
    <property type="entry name" value="NAD(P)-binding Rossmann-like Domain"/>
    <property type="match status" value="1"/>
</dbReference>
<dbReference type="HAMAP" id="MF_00087">
    <property type="entry name" value="Glu_tRNA_reductase"/>
    <property type="match status" value="1"/>
</dbReference>
<dbReference type="InterPro" id="IPR000343">
    <property type="entry name" value="4pyrrol_synth_GluRdtase"/>
</dbReference>
<dbReference type="InterPro" id="IPR015896">
    <property type="entry name" value="4pyrrol_synth_GluRdtase_dimer"/>
</dbReference>
<dbReference type="InterPro" id="IPR015895">
    <property type="entry name" value="4pyrrol_synth_GluRdtase_N"/>
</dbReference>
<dbReference type="InterPro" id="IPR018214">
    <property type="entry name" value="GluRdtase_CS"/>
</dbReference>
<dbReference type="InterPro" id="IPR036343">
    <property type="entry name" value="GluRdtase_N_sf"/>
</dbReference>
<dbReference type="InterPro" id="IPR036291">
    <property type="entry name" value="NAD(P)-bd_dom_sf"/>
</dbReference>
<dbReference type="InterPro" id="IPR006151">
    <property type="entry name" value="Shikm_DH/Glu-tRNA_Rdtase"/>
</dbReference>
<dbReference type="NCBIfam" id="TIGR01035">
    <property type="entry name" value="hemA"/>
    <property type="match status" value="1"/>
</dbReference>
<dbReference type="PANTHER" id="PTHR43013">
    <property type="entry name" value="GLUTAMYL-TRNA REDUCTASE"/>
    <property type="match status" value="1"/>
</dbReference>
<dbReference type="PANTHER" id="PTHR43013:SF1">
    <property type="entry name" value="GLUTAMYL-TRNA REDUCTASE"/>
    <property type="match status" value="1"/>
</dbReference>
<dbReference type="Pfam" id="PF00745">
    <property type="entry name" value="GlutR_dimer"/>
    <property type="match status" value="1"/>
</dbReference>
<dbReference type="Pfam" id="PF05201">
    <property type="entry name" value="GlutR_N"/>
    <property type="match status" value="1"/>
</dbReference>
<dbReference type="Pfam" id="PF01488">
    <property type="entry name" value="Shikimate_DH"/>
    <property type="match status" value="1"/>
</dbReference>
<dbReference type="PIRSF" id="PIRSF000445">
    <property type="entry name" value="4pyrrol_synth_GluRdtase"/>
    <property type="match status" value="1"/>
</dbReference>
<dbReference type="SUPFAM" id="SSF69742">
    <property type="entry name" value="Glutamyl tRNA-reductase catalytic, N-terminal domain"/>
    <property type="match status" value="1"/>
</dbReference>
<dbReference type="SUPFAM" id="SSF51735">
    <property type="entry name" value="NAD(P)-binding Rossmann-fold domains"/>
    <property type="match status" value="1"/>
</dbReference>
<dbReference type="PROSITE" id="PS00747">
    <property type="entry name" value="GLUTR"/>
    <property type="match status" value="1"/>
</dbReference>
<keyword id="KW-0521">NADP</keyword>
<keyword id="KW-0560">Oxidoreductase</keyword>
<keyword id="KW-0627">Porphyrin biosynthesis</keyword>
<protein>
    <recommendedName>
        <fullName evidence="1">Glutamyl-tRNA reductase</fullName>
        <shortName evidence="1">GluTR</shortName>
        <ecNumber evidence="1">1.2.1.70</ecNumber>
    </recommendedName>
</protein>
<feature type="chain" id="PRO_1000004613" description="Glutamyl-tRNA reductase">
    <location>
        <begin position="1"/>
        <end position="400"/>
    </location>
</feature>
<feature type="active site" description="Nucleophile" evidence="1">
    <location>
        <position position="46"/>
    </location>
</feature>
<feature type="binding site" evidence="1">
    <location>
        <begin position="45"/>
        <end position="48"/>
    </location>
    <ligand>
        <name>substrate</name>
    </ligand>
</feature>
<feature type="binding site" evidence="1">
    <location>
        <position position="103"/>
    </location>
    <ligand>
        <name>substrate</name>
    </ligand>
</feature>
<feature type="binding site" evidence="1">
    <location>
        <begin position="108"/>
        <end position="110"/>
    </location>
    <ligand>
        <name>substrate</name>
    </ligand>
</feature>
<feature type="binding site" evidence="1">
    <location>
        <position position="114"/>
    </location>
    <ligand>
        <name>substrate</name>
    </ligand>
</feature>
<feature type="binding site" evidence="1">
    <location>
        <begin position="179"/>
        <end position="184"/>
    </location>
    <ligand>
        <name>NADP(+)</name>
        <dbReference type="ChEBI" id="CHEBI:58349"/>
    </ligand>
</feature>
<feature type="site" description="Important for activity" evidence="1">
    <location>
        <position position="93"/>
    </location>
</feature>
<evidence type="ECO:0000255" key="1">
    <source>
        <dbReference type="HAMAP-Rule" id="MF_00087"/>
    </source>
</evidence>
<proteinExistence type="inferred from homology"/>
<reference key="1">
    <citation type="journal article" date="2006" name="Genome Res.">
        <title>Skewed genomic variability in strains of the toxigenic bacterial pathogen, Clostridium perfringens.</title>
        <authorList>
            <person name="Myers G.S.A."/>
            <person name="Rasko D.A."/>
            <person name="Cheung J.K."/>
            <person name="Ravel J."/>
            <person name="Seshadri R."/>
            <person name="DeBoy R.T."/>
            <person name="Ren Q."/>
            <person name="Varga J."/>
            <person name="Awad M.M."/>
            <person name="Brinkac L.M."/>
            <person name="Daugherty S.C."/>
            <person name="Haft D.H."/>
            <person name="Dodson R.J."/>
            <person name="Madupu R."/>
            <person name="Nelson W.C."/>
            <person name="Rosovitz M.J."/>
            <person name="Sullivan S.A."/>
            <person name="Khouri H."/>
            <person name="Dimitrov G.I."/>
            <person name="Watkins K.L."/>
            <person name="Mulligan S."/>
            <person name="Benton J."/>
            <person name="Radune D."/>
            <person name="Fisher D.J."/>
            <person name="Atkins H.S."/>
            <person name="Hiscox T."/>
            <person name="Jost B.H."/>
            <person name="Billington S.J."/>
            <person name="Songer J.G."/>
            <person name="McClane B.A."/>
            <person name="Titball R.W."/>
            <person name="Rood J.I."/>
            <person name="Melville S.B."/>
            <person name="Paulsen I.T."/>
        </authorList>
    </citation>
    <scope>NUCLEOTIDE SEQUENCE [LARGE SCALE GENOMIC DNA]</scope>
    <source>
        <strain>SM101 / Type A</strain>
    </source>
</reference>
<sequence length="400" mass="45912">MIGVIGVKRNVDIAIREKLALYPKKHKKYVGELLNSFKEVVILNTCNRTEIYFNCTEEISEDEIFDKIFNVFNWNDDLKKYMFLSKEKRAVTHLMEVICGFHSRILGEDQILGQIKDAYKTAISDNSISSELQKMFEIAIACGKKFKTKCKMFEVPVSSVSISINSALLKGCRKFMVLGYGEIGKLAIKHLLSHKVECIYLIVRDKSKASDLEGEIVEILDFNEKNHVINEVDCIVSCTAAPHTVVRNEDIKTEGDIIHIYDLAVPRDVDKELSEKERVILKDIDEISKIDDKNKKIRKERMEEYKHIVEESIEEFLNWLKIREVSSKIRNIKIRENEICSERIKTFSNKGNGENAKLAERMIKSTADAYVNRAIELLKSEALKGSDSSCAEIIEKIFLT</sequence>
<accession>Q0ST14</accession>
<name>HEM1_CLOPS</name>
<gene>
    <name evidence="1" type="primary">hemA</name>
    <name type="ordered locus">CPR_1424</name>
</gene>